<protein>
    <recommendedName>
        <fullName evidence="1">Bile salt hydrolase/transferase</fullName>
        <shortName evidence="1">BSH/T</shortName>
    </recommendedName>
    <alternativeName>
        <fullName evidence="1">Bile acid amine N-acyltransferase</fullName>
        <ecNumber evidence="1">2.3.1.-</ecNumber>
    </alternativeName>
    <alternativeName>
        <fullName evidence="5">Bile salt hydrolase</fullName>
        <shortName evidence="5">BSH</shortName>
    </alternativeName>
    <alternativeName>
        <fullName evidence="7">Chenodeoxycholoyltaurine hydrolase</fullName>
        <ecNumber evidence="3">3.5.1.74</ecNumber>
    </alternativeName>
    <alternativeName>
        <fullName evidence="7">Choloylglycine hydrolase</fullName>
        <ecNumber evidence="3">3.5.1.24</ecNumber>
    </alternativeName>
    <alternativeName>
        <fullName evidence="7 8">Conjugated bile acid hydrolase</fullName>
        <ecNumber evidence="3 4">3.5.1.-</ecNumber>
    </alternativeName>
</protein>
<keyword id="KW-0002">3D-structure</keyword>
<keyword id="KW-0903">Direct protein sequencing</keyword>
<keyword id="KW-0378">Hydrolase</keyword>
<keyword id="KW-0443">Lipid metabolism</keyword>
<keyword id="KW-0808">Transferase</keyword>
<reference key="1">
    <citation type="journal article" date="2000" name="Appl. Environ. Microbiol.">
        <title>Bile salt hydrolase of Bifidobacterium longum-biochemical and genetic characterization.</title>
        <authorList>
            <person name="Tanaka H."/>
            <person name="Hashiba H."/>
            <person name="Kok J."/>
            <person name="Mierau I."/>
        </authorList>
    </citation>
    <scope>NUCLEOTIDE SEQUENCE [GENOMIC DNA]</scope>
    <scope>PROTEIN SEQUENCE OF 2-31</scope>
    <scope>FUNCTION</scope>
    <scope>CATALYTIC ACTIVITY</scope>
    <scope>BIOPHYSICOCHEMICAL PROPERTIES</scope>
    <scope>SUBSTRATE SPECIFICITY</scope>
    <scope>ACTIVITY REGULATION</scope>
    <scope>SUBUNIT</scope>
    <scope>MUTAGENESIS OF CYS-2</scope>
    <scope>ACTIVE SITE</scope>
    <scope>INDUCTION</scope>
    <source>
        <strain>SBT2928</strain>
    </source>
</reference>
<reference evidence="10 11" key="2">
    <citation type="journal article" date="2006" name="J. Biol. Chem.">
        <title>Structural and functional analysis of a conjugated bile salt hydrolase from Bifidobacterium longum reveals an evolutionary relationship with penicillin V acylase.</title>
        <authorList>
            <person name="Kumar R.S."/>
            <person name="Brannigan J.A."/>
            <person name="Prabhune A.A."/>
            <person name="Pundle A.V."/>
            <person name="Dodson G.G."/>
            <person name="Dodson E.J."/>
            <person name="Suresh C.G."/>
        </authorList>
    </citation>
    <scope>X-RAY CRYSTALLOGRAPHY (2.30 ANGSTROMS) OF 2-317</scope>
    <scope>FUNCTION</scope>
    <scope>CATALYTIC ACTIVITY</scope>
    <scope>BIOPHYSICOCHEMICAL PROPERTIES</scope>
    <scope>SUBSTRATE SPECIFICITY</scope>
    <scope>ACTIVITY REGULATION</scope>
    <scope>ACTIVE SITE</scope>
    <scope>SUBUNIT</scope>
    <scope>MUTAGENESIS OF CYS-2 AND THR-3</scope>
</reference>
<accession>Q9KK62</accession>
<evidence type="ECO:0000250" key="1">
    <source>
        <dbReference type="UniProtKB" id="P0DXD2"/>
    </source>
</evidence>
<evidence type="ECO:0000250" key="2">
    <source>
        <dbReference type="UniProtKB" id="P54965"/>
    </source>
</evidence>
<evidence type="ECO:0000269" key="3">
    <source>
    </source>
</evidence>
<evidence type="ECO:0000269" key="4">
    <source>
    </source>
</evidence>
<evidence type="ECO:0000303" key="5">
    <source>
    </source>
</evidence>
<evidence type="ECO:0000305" key="6"/>
<evidence type="ECO:0000305" key="7">
    <source>
    </source>
</evidence>
<evidence type="ECO:0000305" key="8">
    <source>
    </source>
</evidence>
<evidence type="ECO:0000312" key="9">
    <source>
        <dbReference type="EMBL" id="AAF67801.1"/>
    </source>
</evidence>
<evidence type="ECO:0007744" key="10">
    <source>
        <dbReference type="PDB" id="2HEZ"/>
    </source>
</evidence>
<evidence type="ECO:0007744" key="11">
    <source>
        <dbReference type="PDB" id="2HF0"/>
    </source>
</evidence>
<evidence type="ECO:0007829" key="12">
    <source>
        <dbReference type="PDB" id="2HF0"/>
    </source>
</evidence>
<evidence type="ECO:0007829" key="13">
    <source>
        <dbReference type="PDB" id="8ETE"/>
    </source>
</evidence>
<gene>
    <name evidence="5 9" type="primary">bsh</name>
</gene>
<organism>
    <name type="scientific">Bifidobacterium longum</name>
    <dbReference type="NCBI Taxonomy" id="216816"/>
    <lineage>
        <taxon>Bacteria</taxon>
        <taxon>Bacillati</taxon>
        <taxon>Actinomycetota</taxon>
        <taxon>Actinomycetes</taxon>
        <taxon>Bifidobacteriales</taxon>
        <taxon>Bifidobacteriaceae</taxon>
        <taxon>Bifidobacterium</taxon>
    </lineage>
</organism>
<dbReference type="EC" id="2.3.1.-" evidence="1"/>
<dbReference type="EC" id="3.5.1.74" evidence="3"/>
<dbReference type="EC" id="3.5.1.24" evidence="3"/>
<dbReference type="EC" id="3.5.1.-" evidence="3 4"/>
<dbReference type="EMBL" id="AF148138">
    <property type="protein sequence ID" value="AAF67801.1"/>
    <property type="molecule type" value="Genomic_DNA"/>
</dbReference>
<dbReference type="RefSeq" id="WP_013410903.1">
    <property type="nucleotide sequence ID" value="NZ_AP014658.1"/>
</dbReference>
<dbReference type="PDB" id="2HEZ">
    <property type="method" value="X-ray"/>
    <property type="resolution" value="2.50 A"/>
    <property type="chains" value="A/B=2-317"/>
</dbReference>
<dbReference type="PDB" id="2HF0">
    <property type="method" value="X-ray"/>
    <property type="resolution" value="2.30 A"/>
    <property type="chains" value="A/B=2-317"/>
</dbReference>
<dbReference type="PDB" id="8ESI">
    <property type="method" value="X-ray"/>
    <property type="resolution" value="2.35 A"/>
    <property type="chains" value="A/B/C/D/E/F/G/H=1-317"/>
</dbReference>
<dbReference type="PDB" id="8ETE">
    <property type="method" value="X-ray"/>
    <property type="resolution" value="2.30 A"/>
    <property type="chains" value="A/B=1-317"/>
</dbReference>
<dbReference type="PDBsum" id="2HEZ"/>
<dbReference type="PDBsum" id="2HF0"/>
<dbReference type="PDBsum" id="8ESI"/>
<dbReference type="PDBsum" id="8ETE"/>
<dbReference type="SMR" id="Q9KK62"/>
<dbReference type="SwissLipids" id="SLP:000001350"/>
<dbReference type="MEROPS" id="C59.951"/>
<dbReference type="MoonProt" id="Q9KK62"/>
<dbReference type="OMA" id="PHEFVTW"/>
<dbReference type="BioCyc" id="MetaCyc:MONOMER-15684"/>
<dbReference type="BRENDA" id="3.5.1.24">
    <property type="organism ID" value="851"/>
</dbReference>
<dbReference type="UniPathway" id="UPA00221"/>
<dbReference type="EvolutionaryTrace" id="Q9KK62"/>
<dbReference type="GO" id="GO:0009274">
    <property type="term" value="C:peptidoglycan-based cell wall"/>
    <property type="evidence" value="ECO:0000314"/>
    <property type="project" value="CAFA"/>
</dbReference>
<dbReference type="GO" id="GO:0047742">
    <property type="term" value="F:chenodeoxycholoyltaurine hydrolase activity"/>
    <property type="evidence" value="ECO:0007669"/>
    <property type="project" value="UniProtKB-EC"/>
</dbReference>
<dbReference type="GO" id="GO:0045302">
    <property type="term" value="F:choloylglycine hydrolase activity"/>
    <property type="evidence" value="ECO:0000314"/>
    <property type="project" value="CAFA"/>
</dbReference>
<dbReference type="GO" id="GO:0016740">
    <property type="term" value="F:transferase activity"/>
    <property type="evidence" value="ECO:0007669"/>
    <property type="project" value="UniProtKB-KW"/>
</dbReference>
<dbReference type="GO" id="GO:0006699">
    <property type="term" value="P:bile acid biosynthetic process"/>
    <property type="evidence" value="ECO:0007669"/>
    <property type="project" value="UniProtKB-UniPathway"/>
</dbReference>
<dbReference type="CDD" id="cd00542">
    <property type="entry name" value="Ntn_PVA"/>
    <property type="match status" value="1"/>
</dbReference>
<dbReference type="FunFam" id="3.60.60.10:FF:000004">
    <property type="entry name" value="Bile salt hydrolase"/>
    <property type="match status" value="1"/>
</dbReference>
<dbReference type="Gene3D" id="3.60.60.10">
    <property type="entry name" value="Penicillin V Acylase, Chain A"/>
    <property type="match status" value="1"/>
</dbReference>
<dbReference type="InterPro" id="IPR047711">
    <property type="entry name" value="CBAH"/>
</dbReference>
<dbReference type="InterPro" id="IPR029132">
    <property type="entry name" value="CBAH/NAAA_C"/>
</dbReference>
<dbReference type="InterPro" id="IPR029055">
    <property type="entry name" value="Ntn_hydrolases_N"/>
</dbReference>
<dbReference type="InterPro" id="IPR052193">
    <property type="entry name" value="Peptidase_C59"/>
</dbReference>
<dbReference type="NCBIfam" id="NF038245">
    <property type="entry name" value="bile_salt_hydro"/>
    <property type="match status" value="1"/>
</dbReference>
<dbReference type="PANTHER" id="PTHR35527">
    <property type="entry name" value="CHOLOYLGLYCINE HYDROLASE"/>
    <property type="match status" value="1"/>
</dbReference>
<dbReference type="PANTHER" id="PTHR35527:SF2">
    <property type="entry name" value="HYDROLASE"/>
    <property type="match status" value="1"/>
</dbReference>
<dbReference type="Pfam" id="PF02275">
    <property type="entry name" value="CBAH"/>
    <property type="match status" value="1"/>
</dbReference>
<dbReference type="SUPFAM" id="SSF56235">
    <property type="entry name" value="N-terminal nucleophile aminohydrolases (Ntn hydrolases)"/>
    <property type="match status" value="1"/>
</dbReference>
<feature type="initiator methionine" description="Removed" evidence="3">
    <location>
        <position position="1"/>
    </location>
</feature>
<feature type="chain" id="PRO_0000450324" description="Bile salt hydrolase/transferase">
    <location>
        <begin position="2"/>
        <end position="317"/>
    </location>
</feature>
<feature type="active site" description="Nucleophile; acyl-thioester intermediate" evidence="7">
    <location>
        <position position="2"/>
    </location>
</feature>
<feature type="binding site" evidence="2">
    <location>
        <position position="2"/>
    </location>
    <ligand>
        <name>deoxycholate</name>
        <dbReference type="ChEBI" id="CHEBI:23614"/>
    </ligand>
</feature>
<feature type="binding site" evidence="2">
    <location>
        <position position="18"/>
    </location>
    <ligand>
        <name>deoxycholate</name>
        <dbReference type="ChEBI" id="CHEBI:23614"/>
    </ligand>
</feature>
<feature type="binding site" evidence="2">
    <location>
        <position position="82"/>
    </location>
    <ligand>
        <name>taurine</name>
        <dbReference type="ChEBI" id="CHEBI:507393"/>
    </ligand>
</feature>
<feature type="mutagenesis site" description="Loss of hydrolase activity." evidence="3 4">
    <original>C</original>
    <variation>A</variation>
    <location>
        <position position="2"/>
    </location>
</feature>
<feature type="mutagenesis site" description="About 2-fold decrease in hydrolase activity, but no change in substrate affinity." evidence="4">
    <original>T</original>
    <variation>A</variation>
    <location>
        <position position="3"/>
    </location>
</feature>
<feature type="strand" evidence="12">
    <location>
        <begin position="3"/>
        <end position="8"/>
    </location>
</feature>
<feature type="strand" evidence="12">
    <location>
        <begin position="14"/>
        <end position="23"/>
    </location>
</feature>
<feature type="strand" evidence="12">
    <location>
        <begin position="29"/>
        <end position="33"/>
    </location>
</feature>
<feature type="strand" evidence="13">
    <location>
        <begin position="35"/>
        <end position="37"/>
    </location>
</feature>
<feature type="strand" evidence="12">
    <location>
        <begin position="54"/>
        <end position="72"/>
    </location>
</feature>
<feature type="strand" evidence="12">
    <location>
        <begin position="77"/>
        <end position="82"/>
    </location>
</feature>
<feature type="turn" evidence="12">
    <location>
        <begin position="84"/>
        <end position="86"/>
    </location>
</feature>
<feature type="strand" evidence="12">
    <location>
        <begin position="90"/>
        <end position="92"/>
    </location>
</feature>
<feature type="strand" evidence="12">
    <location>
        <begin position="97"/>
        <end position="101"/>
    </location>
</feature>
<feature type="turn" evidence="12">
    <location>
        <begin position="102"/>
        <end position="104"/>
    </location>
</feature>
<feature type="helix" evidence="12">
    <location>
        <begin position="105"/>
        <end position="112"/>
    </location>
</feature>
<feature type="helix" evidence="12">
    <location>
        <begin position="116"/>
        <end position="123"/>
    </location>
</feature>
<feature type="strand" evidence="12">
    <location>
        <begin position="126"/>
        <end position="129"/>
    </location>
</feature>
<feature type="strand" evidence="12">
    <location>
        <begin position="134"/>
        <end position="136"/>
    </location>
</feature>
<feature type="strand" evidence="12">
    <location>
        <begin position="141"/>
        <end position="146"/>
    </location>
</feature>
<feature type="strand" evidence="12">
    <location>
        <begin position="151"/>
        <end position="157"/>
    </location>
</feature>
<feature type="strand" evidence="12">
    <location>
        <begin position="160"/>
        <end position="165"/>
    </location>
</feature>
<feature type="strand" evidence="12">
    <location>
        <begin position="173"/>
        <end position="175"/>
    </location>
</feature>
<feature type="helix" evidence="12">
    <location>
        <begin position="177"/>
        <end position="183"/>
    </location>
</feature>
<feature type="helix" evidence="12">
    <location>
        <begin position="184"/>
        <end position="187"/>
    </location>
</feature>
<feature type="strand" evidence="12">
    <location>
        <begin position="198"/>
        <end position="200"/>
    </location>
</feature>
<feature type="strand" evidence="12">
    <location>
        <begin position="203"/>
        <end position="205"/>
    </location>
</feature>
<feature type="helix" evidence="12">
    <location>
        <begin position="212"/>
        <end position="214"/>
    </location>
</feature>
<feature type="helix" evidence="12">
    <location>
        <begin position="223"/>
        <end position="236"/>
    </location>
</feature>
<feature type="helix" evidence="12">
    <location>
        <begin position="243"/>
        <end position="253"/>
    </location>
</feature>
<feature type="turn" evidence="12">
    <location>
        <begin position="254"/>
        <end position="257"/>
    </location>
</feature>
<feature type="strand" evidence="13">
    <location>
        <begin position="267"/>
        <end position="269"/>
    </location>
</feature>
<feature type="strand" evidence="12">
    <location>
        <begin position="273"/>
        <end position="281"/>
    </location>
</feature>
<feature type="turn" evidence="12">
    <location>
        <begin position="282"/>
        <end position="285"/>
    </location>
</feature>
<feature type="strand" evidence="12">
    <location>
        <begin position="286"/>
        <end position="293"/>
    </location>
</feature>
<feature type="strand" evidence="12">
    <location>
        <begin position="298"/>
        <end position="302"/>
    </location>
</feature>
<feature type="strand" evidence="12">
    <location>
        <begin position="309"/>
        <end position="311"/>
    </location>
</feature>
<feature type="strand" evidence="12">
    <location>
        <begin position="313"/>
        <end position="315"/>
    </location>
</feature>
<sequence length="317" mass="35155">MCTGVRFSDDEGNTYFGRNLDWSFSYGETILVTPRGYHYDTVFGAGGKAKPNAVIGVGVVMADRPMYFDCANEHGLAIAGLNFPGYASFVHEPVEGTENVATFEFPLWVARNFDSVDEVEETLRNVTLVSQIVPGQQESLLHWFIGDGKRSIVVEQMADGMHVHHDDVDVLTNQPTFDFHMENLRNYMCVSNEMAEPTSWGKASLTAWGAGVGMHGIPGDVSSPSRFVRVAYTNAHYPQQNDEAANVSRLFHTLGSVQMVDGMAKMGDGQFERTLFTSGYSSKTNTYYMNTYDDPAIRSYAMADYDMDSSELISVAR</sequence>
<proteinExistence type="evidence at protein level"/>
<comment type="function">
    <text evidence="1 3 4">Possesses dual functions in bile acid metabolism (By similarity). Acts as a bile salt hydrolase that catalyzes the deconjugation of glycine- and taurine-linked bile salts, which occurs naturally in the intestines of humans, releasing amino acid residues and deconjugated bile salts (bile acids). Can hydrolyze the amide bond in all six major human conjugated bile salts, namely glycocholate (GCA), glycodeoxycholate (GDCA), glycochenodeoxycholate (GCDCA), taurocholate (TCA), taurodeoxycholate (TDCA) and taurochenodeoxycholate (TCDCA). Shows a slight preference for glycine-conjugated bile acids as substrates (PubMed:10831430, PubMed:16905539). Also acts as an amine N-acyltransferase that conjugates a wide variety of amino acids to conjugated and non-conjugated bile acids, thus producing bacterial bile acid amidates (BBAAs) - also named microbially conjugated bile acids (MCBAs) - in the gastrointestinal tract. These BBAAs may facilitate communication between the microbiota and host through the activation of human ligand-activated transcription factors (By similarity). Is totally inactive toward penicillin V (PubMed:16905539).</text>
</comment>
<comment type="catalytic activity">
    <reaction evidence="3 4">
        <text>glycocholate + H2O = cholate + glycine</text>
        <dbReference type="Rhea" id="RHEA:19353"/>
        <dbReference type="ChEBI" id="CHEBI:15377"/>
        <dbReference type="ChEBI" id="CHEBI:29746"/>
        <dbReference type="ChEBI" id="CHEBI:29747"/>
        <dbReference type="ChEBI" id="CHEBI:57305"/>
        <dbReference type="EC" id="3.5.1.24"/>
    </reaction>
    <physiologicalReaction direction="left-to-right" evidence="7">
        <dbReference type="Rhea" id="RHEA:19354"/>
    </physiologicalReaction>
</comment>
<comment type="catalytic activity">
    <reaction evidence="3 4">
        <text>glycodeoxycholate + H2O = deoxycholate + glycine</text>
        <dbReference type="Rhea" id="RHEA:47552"/>
        <dbReference type="ChEBI" id="CHEBI:15377"/>
        <dbReference type="ChEBI" id="CHEBI:23614"/>
        <dbReference type="ChEBI" id="CHEBI:57305"/>
        <dbReference type="ChEBI" id="CHEBI:82982"/>
    </reaction>
    <physiologicalReaction direction="left-to-right" evidence="7">
        <dbReference type="Rhea" id="RHEA:47553"/>
    </physiologicalReaction>
</comment>
<comment type="catalytic activity">
    <reaction evidence="3 4">
        <text>chenodeoxycholate + glycine = glycochenodeoxycholate + H2O</text>
        <dbReference type="Rhea" id="RHEA:47112"/>
        <dbReference type="ChEBI" id="CHEBI:15377"/>
        <dbReference type="ChEBI" id="CHEBI:36234"/>
        <dbReference type="ChEBI" id="CHEBI:36252"/>
        <dbReference type="ChEBI" id="CHEBI:57305"/>
    </reaction>
    <physiologicalReaction direction="right-to-left" evidence="7">
        <dbReference type="Rhea" id="RHEA:47114"/>
    </physiologicalReaction>
</comment>
<comment type="catalytic activity">
    <reaction evidence="3 4">
        <text>cholate + taurine = taurocholate + H2O</text>
        <dbReference type="Rhea" id="RHEA:47108"/>
        <dbReference type="ChEBI" id="CHEBI:15377"/>
        <dbReference type="ChEBI" id="CHEBI:29747"/>
        <dbReference type="ChEBI" id="CHEBI:36257"/>
        <dbReference type="ChEBI" id="CHEBI:507393"/>
    </reaction>
    <physiologicalReaction direction="right-to-left" evidence="7">
        <dbReference type="Rhea" id="RHEA:47110"/>
    </physiologicalReaction>
</comment>
<comment type="catalytic activity">
    <reaction evidence="3 4">
        <text>taurodeoxycholate + H2O = deoxycholate + taurine</text>
        <dbReference type="Rhea" id="RHEA:47556"/>
        <dbReference type="ChEBI" id="CHEBI:15377"/>
        <dbReference type="ChEBI" id="CHEBI:23614"/>
        <dbReference type="ChEBI" id="CHEBI:36261"/>
        <dbReference type="ChEBI" id="CHEBI:507393"/>
    </reaction>
    <physiologicalReaction direction="left-to-right" evidence="7">
        <dbReference type="Rhea" id="RHEA:47557"/>
    </physiologicalReaction>
</comment>
<comment type="catalytic activity">
    <reaction evidence="3 4">
        <text>taurochenodeoxycholate + H2O = chenodeoxycholate + taurine</text>
        <dbReference type="Rhea" id="RHEA:16309"/>
        <dbReference type="ChEBI" id="CHEBI:9407"/>
        <dbReference type="ChEBI" id="CHEBI:15377"/>
        <dbReference type="ChEBI" id="CHEBI:36234"/>
        <dbReference type="ChEBI" id="CHEBI:507393"/>
        <dbReference type="EC" id="3.5.1.74"/>
    </reaction>
    <physiologicalReaction direction="left-to-right" evidence="7">
        <dbReference type="Rhea" id="RHEA:16310"/>
    </physiologicalReaction>
</comment>
<comment type="catalytic activity">
    <reaction evidence="1">
        <text>an L-alpha-amino acid + cholate = an N-choloyl-L-alpha-amino acid + H2O</text>
        <dbReference type="Rhea" id="RHEA:79087"/>
        <dbReference type="ChEBI" id="CHEBI:15377"/>
        <dbReference type="ChEBI" id="CHEBI:29747"/>
        <dbReference type="ChEBI" id="CHEBI:59869"/>
        <dbReference type="ChEBI" id="CHEBI:229709"/>
    </reaction>
    <physiologicalReaction direction="left-to-right" evidence="1">
        <dbReference type="Rhea" id="RHEA:79088"/>
    </physiologicalReaction>
</comment>
<comment type="catalytic activity">
    <reaction evidence="1">
        <text>an L-alpha-amino acid + taurocholate = an N-choloyl-L-alpha-amino acid + taurine</text>
        <dbReference type="Rhea" id="RHEA:79091"/>
        <dbReference type="ChEBI" id="CHEBI:36257"/>
        <dbReference type="ChEBI" id="CHEBI:59869"/>
        <dbReference type="ChEBI" id="CHEBI:229709"/>
        <dbReference type="ChEBI" id="CHEBI:507393"/>
    </reaction>
    <physiologicalReaction direction="left-to-right" evidence="1">
        <dbReference type="Rhea" id="RHEA:79092"/>
    </physiologicalReaction>
</comment>
<comment type="catalytic activity">
    <reaction evidence="1">
        <text>cholate + L-alanine = L-alanocholate + H2O</text>
        <dbReference type="Rhea" id="RHEA:79131"/>
        <dbReference type="ChEBI" id="CHEBI:15377"/>
        <dbReference type="ChEBI" id="CHEBI:29747"/>
        <dbReference type="ChEBI" id="CHEBI:57972"/>
        <dbReference type="ChEBI" id="CHEBI:229710"/>
    </reaction>
    <physiologicalReaction direction="left-to-right" evidence="1">
        <dbReference type="Rhea" id="RHEA:79132"/>
    </physiologicalReaction>
</comment>
<comment type="catalytic activity">
    <reaction evidence="1">
        <text>taurocholate + L-alanine = L-alanocholate + taurine</text>
        <dbReference type="Rhea" id="RHEA:79135"/>
        <dbReference type="ChEBI" id="CHEBI:36257"/>
        <dbReference type="ChEBI" id="CHEBI:57972"/>
        <dbReference type="ChEBI" id="CHEBI:229710"/>
        <dbReference type="ChEBI" id="CHEBI:507393"/>
    </reaction>
    <physiologicalReaction direction="left-to-right" evidence="1">
        <dbReference type="Rhea" id="RHEA:79136"/>
    </physiologicalReaction>
</comment>
<comment type="catalytic activity">
    <reaction evidence="1">
        <text>cholate + L-serine = L-serocholate + H2O</text>
        <dbReference type="Rhea" id="RHEA:79139"/>
        <dbReference type="ChEBI" id="CHEBI:15377"/>
        <dbReference type="ChEBI" id="CHEBI:29747"/>
        <dbReference type="ChEBI" id="CHEBI:33384"/>
        <dbReference type="ChEBI" id="CHEBI:229711"/>
    </reaction>
    <physiologicalReaction direction="left-to-right" evidence="1">
        <dbReference type="Rhea" id="RHEA:79140"/>
    </physiologicalReaction>
</comment>
<comment type="catalytic activity">
    <reaction evidence="1">
        <text>taurocholate + L-serine = L-serocholate + taurine</text>
        <dbReference type="Rhea" id="RHEA:79143"/>
        <dbReference type="ChEBI" id="CHEBI:33384"/>
        <dbReference type="ChEBI" id="CHEBI:36257"/>
        <dbReference type="ChEBI" id="CHEBI:229711"/>
        <dbReference type="ChEBI" id="CHEBI:507393"/>
    </reaction>
    <physiologicalReaction direction="left-to-right" evidence="1">
        <dbReference type="Rhea" id="RHEA:79144"/>
    </physiologicalReaction>
</comment>
<comment type="catalytic activity">
    <reaction evidence="1">
        <text>cholate + L-histidine = L-histidocholate + H2O</text>
        <dbReference type="Rhea" id="RHEA:79099"/>
        <dbReference type="ChEBI" id="CHEBI:15377"/>
        <dbReference type="ChEBI" id="CHEBI:29747"/>
        <dbReference type="ChEBI" id="CHEBI:57595"/>
        <dbReference type="ChEBI" id="CHEBI:229712"/>
    </reaction>
    <physiologicalReaction direction="left-to-right" evidence="1">
        <dbReference type="Rhea" id="RHEA:79100"/>
    </physiologicalReaction>
</comment>
<comment type="catalytic activity">
    <reaction evidence="1">
        <text>taurocholate + L-histidine = L-histidocholate + taurine</text>
        <dbReference type="Rhea" id="RHEA:79103"/>
        <dbReference type="ChEBI" id="CHEBI:36257"/>
        <dbReference type="ChEBI" id="CHEBI:57595"/>
        <dbReference type="ChEBI" id="CHEBI:229712"/>
        <dbReference type="ChEBI" id="CHEBI:507393"/>
    </reaction>
    <physiologicalReaction direction="left-to-right" evidence="1">
        <dbReference type="Rhea" id="RHEA:79104"/>
    </physiologicalReaction>
</comment>
<comment type="activity regulation">
    <text evidence="3 4">Hydrolase activity is competitively inhibited by the products cholate (CA) and deoxycholate (DCA), and by phenylacetate and 4-aminophenylacetate. Penicillin V and penicillin G show mixed inhibition (PubMed:16905539). Strongly inhibited by thiol enzyme inhibitors in vitro (PubMed:10831430).</text>
</comment>
<comment type="biophysicochemical properties">
    <kinetics>
        <KM evidence="3">0.16 mM for glycocholate (at 37 degrees Celsius and pH 5.5)</KM>
        <KM evidence="3">0.28 mM for glycodeoxycholate (at 37 degrees Celsius and pH 5.5)</KM>
        <KM evidence="3">0.13 mM for glycochenodeoxycholate (at 37 degrees Celsius and pH 5.5)</KM>
        <KM evidence="3">1.12 mM for taurocholate (at 37 degrees Celsius and pH 5.5)</KM>
        <KM evidence="3">0.79 mM for taurodeoxycholate (at 37 degrees Celsius and pH 5.5)</KM>
        <KM evidence="3">0.33 mM for taurochenodeoxycholate (at 37 degrees Celsius and pH 5.5)</KM>
        <KM evidence="4">0.22 mM for glycocholate (at 40 degrees Celsius and pH 6.5)</KM>
        <KM evidence="4">0.18 mM for glycodeoxycholate (at 40 degrees Celsius and pH 6.5)</KM>
        <KM evidence="4">0.28 mM for glycochenodeoxycholate (at 40 degrees Celsius and pH 6.5)</KM>
        <KM evidence="4">0.32 mM for taurocholate (at 40 degrees Celsius and pH 6.5)</KM>
        <KM evidence="4">0.49 mM for taurodeoxycholate (at 40 degrees Celsius and pH 6.5)</KM>
        <KM evidence="4">0.42 mM for taurochenodeoxycholate (at 40 degrees Celsius and pH 6.5)</KM>
        <text evidence="4">kcat is 85 sec(-1) with glycocholate as substrate. kcat is 76 sec(-1) with taurocholate as substrate (at 40 degrees Celsius and pH 6.5).</text>
    </kinetics>
    <phDependence>
        <text evidence="3">Optimum pH is 6 for the hydrolase activity. Highly active in the pH range 5-7. Is stable at pH values from 4 to 8. At pH values above 8 and below 4 the enzyme is rapidly inactivated.</text>
    </phDependence>
    <temperatureDependence>
        <text evidence="3">Optimum temperature is 40-45 degrees Celsius for the hydrolase activity. Is stable at temperatures from 4 to 37 degrees Celsius. During 30 minutes of incubation at 40 degrees Celsius, about 20 to 30% of the activity is lost, and at 50 degrees Celsius only 20% of the activity is retained.</text>
    </temperatureDependence>
</comment>
<comment type="pathway">
    <text evidence="7">Lipid metabolism; bile acid biosynthesis.</text>
</comment>
<comment type="subunit">
    <text evidence="3 4">Homotetramer (PubMed:10831430, PubMed:16905539). The tetramer consists of a dimer of dimers (PubMed:16905539).</text>
</comment>
<comment type="induction">
    <text evidence="3">Is part of an operon containing at least two genes, bsh and glnE (GlnE is glutamine synthetase adenylyltransferase).</text>
</comment>
<comment type="similarity">
    <text evidence="6">Belongs to the peptidase C59 family.</text>
</comment>
<name>CBH_BIFLN</name>